<reference key="1">
    <citation type="submission" date="2006-05" db="EMBL/GenBank/DDBJ databases">
        <authorList>
            <consortium name="Genoscope"/>
        </authorList>
    </citation>
    <scope>NUCLEOTIDE SEQUENCE [LARGE SCALE GENOMIC DNA]</scope>
    <source>
        <strain>WH7803</strain>
    </source>
</reference>
<name>UCRI_SYNPW</name>
<keyword id="KW-0001">2Fe-2S</keyword>
<keyword id="KW-1015">Disulfide bond</keyword>
<keyword id="KW-0249">Electron transport</keyword>
<keyword id="KW-0408">Iron</keyword>
<keyword id="KW-0411">Iron-sulfur</keyword>
<keyword id="KW-0472">Membrane</keyword>
<keyword id="KW-0479">Metal-binding</keyword>
<keyword id="KW-1185">Reference proteome</keyword>
<keyword id="KW-0793">Thylakoid</keyword>
<keyword id="KW-1278">Translocase</keyword>
<keyword id="KW-0812">Transmembrane</keyword>
<keyword id="KW-1133">Transmembrane helix</keyword>
<keyword id="KW-0813">Transport</keyword>
<organism>
    <name type="scientific">Synechococcus sp. (strain WH7803)</name>
    <dbReference type="NCBI Taxonomy" id="32051"/>
    <lineage>
        <taxon>Bacteria</taxon>
        <taxon>Bacillati</taxon>
        <taxon>Cyanobacteriota</taxon>
        <taxon>Cyanophyceae</taxon>
        <taxon>Synechococcales</taxon>
        <taxon>Synechococcaceae</taxon>
        <taxon>Synechococcus</taxon>
    </lineage>
</organism>
<sequence>MTQMPAGDVPGMGRRQFMNLLTFGSVTGVALGALYPVVNYFIPPRAAGSGGGTSAKDELGNAVTASGWLSTHPAGDRSLVQGLKGDPTYLIVEGDDAIGSYGINAICTHLGCVVPWNSGANKFMCPCHGSQYDATGKVVRGPAPLSLALANVSVENDNVFVSQWTDTDFRTGEKPWWA</sequence>
<feature type="chain" id="PRO_0000298468" description="Cytochrome b6-f complex iron-sulfur subunit">
    <location>
        <begin position="1"/>
        <end position="178"/>
    </location>
</feature>
<feature type="transmembrane region" description="Helical" evidence="1">
    <location>
        <begin position="20"/>
        <end position="42"/>
    </location>
</feature>
<feature type="domain" description="Rieske" evidence="1">
    <location>
        <begin position="71"/>
        <end position="161"/>
    </location>
</feature>
<feature type="binding site" evidence="1">
    <location>
        <position position="107"/>
    </location>
    <ligand>
        <name>[2Fe-2S] cluster</name>
        <dbReference type="ChEBI" id="CHEBI:190135"/>
    </ligand>
</feature>
<feature type="binding site" evidence="1">
    <location>
        <position position="109"/>
    </location>
    <ligand>
        <name>[2Fe-2S] cluster</name>
        <dbReference type="ChEBI" id="CHEBI:190135"/>
    </ligand>
</feature>
<feature type="binding site" evidence="1">
    <location>
        <position position="125"/>
    </location>
    <ligand>
        <name>[2Fe-2S] cluster</name>
        <dbReference type="ChEBI" id="CHEBI:190135"/>
    </ligand>
</feature>
<feature type="binding site" evidence="1">
    <location>
        <position position="128"/>
    </location>
    <ligand>
        <name>[2Fe-2S] cluster</name>
        <dbReference type="ChEBI" id="CHEBI:190135"/>
    </ligand>
</feature>
<feature type="disulfide bond" evidence="1">
    <location>
        <begin position="112"/>
        <end position="127"/>
    </location>
</feature>
<comment type="function">
    <text evidence="1">Component of the cytochrome b6-f complex, which mediates electron transfer between photosystem II (PSII) and photosystem I (PSI), cyclic electron flow around PSI, and state transitions.</text>
</comment>
<comment type="catalytic activity">
    <reaction evidence="1">
        <text>2 oxidized [plastocyanin] + a plastoquinol + 2 H(+)(in) = 2 reduced [plastocyanin] + a plastoquinone + 4 H(+)(out)</text>
        <dbReference type="Rhea" id="RHEA:22148"/>
        <dbReference type="Rhea" id="RHEA-COMP:9561"/>
        <dbReference type="Rhea" id="RHEA-COMP:9562"/>
        <dbReference type="Rhea" id="RHEA-COMP:10039"/>
        <dbReference type="Rhea" id="RHEA-COMP:10040"/>
        <dbReference type="ChEBI" id="CHEBI:15378"/>
        <dbReference type="ChEBI" id="CHEBI:17757"/>
        <dbReference type="ChEBI" id="CHEBI:29036"/>
        <dbReference type="ChEBI" id="CHEBI:49552"/>
        <dbReference type="ChEBI" id="CHEBI:62192"/>
        <dbReference type="EC" id="7.1.1.6"/>
    </reaction>
</comment>
<comment type="cofactor">
    <cofactor evidence="1">
        <name>[2Fe-2S] cluster</name>
        <dbReference type="ChEBI" id="CHEBI:190135"/>
    </cofactor>
    <text evidence="1">Binds 1 [2Fe-2S] cluster per subunit.</text>
</comment>
<comment type="subunit">
    <text evidence="1">The 4 large subunits of the cytochrome b6-f complex are cytochrome b6, subunit IV (17 kDa polypeptide, PetD), cytochrome f and the Rieske protein, while the 4 small subunits are PetG, PetL, PetM and PetN. The complex functions as a dimer.</text>
</comment>
<comment type="subcellular location">
    <subcellularLocation>
        <location evidence="1">Cellular thylakoid membrane</location>
        <topology evidence="1">Single-pass membrane protein</topology>
    </subcellularLocation>
    <text evidence="1">The transmembrane helix obliquely spans the membrane in one monomer, and its extrinsic C-terminal domain is part of the other monomer.</text>
</comment>
<comment type="miscellaneous">
    <text>The Rieske iron-sulfur protein is a high potential 2Fe-2S protein.</text>
</comment>
<comment type="similarity">
    <text evidence="1">Belongs to the Rieske iron-sulfur protein family.</text>
</comment>
<proteinExistence type="inferred from homology"/>
<gene>
    <name evidence="1" type="primary">petC</name>
    <name type="ordered locus">SynWH7803_1850</name>
</gene>
<evidence type="ECO:0000255" key="1">
    <source>
        <dbReference type="HAMAP-Rule" id="MF_01335"/>
    </source>
</evidence>
<dbReference type="EC" id="7.1.1.6" evidence="1"/>
<dbReference type="EMBL" id="CT971583">
    <property type="protein sequence ID" value="CAK24276.1"/>
    <property type="molecule type" value="Genomic_DNA"/>
</dbReference>
<dbReference type="SMR" id="A5GMW1"/>
<dbReference type="STRING" id="32051.SynWH7803_1850"/>
<dbReference type="KEGG" id="syx:SynWH7803_1850"/>
<dbReference type="eggNOG" id="COG0723">
    <property type="taxonomic scope" value="Bacteria"/>
</dbReference>
<dbReference type="HOGENOM" id="CLU_055690_8_0_3"/>
<dbReference type="OrthoDB" id="9767869at2"/>
<dbReference type="Proteomes" id="UP000001566">
    <property type="component" value="Chromosome"/>
</dbReference>
<dbReference type="GO" id="GO:0031676">
    <property type="term" value="C:plasma membrane-derived thylakoid membrane"/>
    <property type="evidence" value="ECO:0007669"/>
    <property type="project" value="UniProtKB-SubCell"/>
</dbReference>
<dbReference type="GO" id="GO:0051537">
    <property type="term" value="F:2 iron, 2 sulfur cluster binding"/>
    <property type="evidence" value="ECO:0007669"/>
    <property type="project" value="UniProtKB-KW"/>
</dbReference>
<dbReference type="GO" id="GO:0045158">
    <property type="term" value="F:electron transporter, transferring electrons within cytochrome b6/f complex of photosystem II activity"/>
    <property type="evidence" value="ECO:0007669"/>
    <property type="project" value="UniProtKB-UniRule"/>
</dbReference>
<dbReference type="GO" id="GO:0046872">
    <property type="term" value="F:metal ion binding"/>
    <property type="evidence" value="ECO:0007669"/>
    <property type="project" value="UniProtKB-KW"/>
</dbReference>
<dbReference type="GO" id="GO:0004497">
    <property type="term" value="F:monooxygenase activity"/>
    <property type="evidence" value="ECO:0007669"/>
    <property type="project" value="UniProtKB-ARBA"/>
</dbReference>
<dbReference type="GO" id="GO:0016705">
    <property type="term" value="F:oxidoreductase activity, acting on paired donors, with incorporation or reduction of molecular oxygen"/>
    <property type="evidence" value="ECO:0007669"/>
    <property type="project" value="UniProtKB-ARBA"/>
</dbReference>
<dbReference type="GO" id="GO:0009496">
    <property type="term" value="F:plastoquinol--plastocyanin reductase activity"/>
    <property type="evidence" value="ECO:0007669"/>
    <property type="project" value="UniProtKB-UniRule"/>
</dbReference>
<dbReference type="GO" id="GO:0015979">
    <property type="term" value="P:photosynthesis"/>
    <property type="evidence" value="ECO:0007669"/>
    <property type="project" value="UniProtKB-UniRule"/>
</dbReference>
<dbReference type="CDD" id="cd03471">
    <property type="entry name" value="Rieske_cytochrome_b6f"/>
    <property type="match status" value="1"/>
</dbReference>
<dbReference type="FunFam" id="2.102.10.10:FF:000007">
    <property type="entry name" value="Cytochrome b6-f complex iron-sulfur subunit"/>
    <property type="match status" value="1"/>
</dbReference>
<dbReference type="Gene3D" id="2.102.10.10">
    <property type="entry name" value="Rieske [2Fe-2S] iron-sulphur domain"/>
    <property type="match status" value="1"/>
</dbReference>
<dbReference type="Gene3D" id="1.20.5.700">
    <property type="entry name" value="Single helix bin"/>
    <property type="match status" value="1"/>
</dbReference>
<dbReference type="HAMAP" id="MF_01335">
    <property type="entry name" value="Cytb6_f_Rieske"/>
    <property type="match status" value="1"/>
</dbReference>
<dbReference type="InterPro" id="IPR023960">
    <property type="entry name" value="Cyt_b6_f_Rieske"/>
</dbReference>
<dbReference type="InterPro" id="IPR017941">
    <property type="entry name" value="Rieske_2Fe-2S"/>
</dbReference>
<dbReference type="InterPro" id="IPR036922">
    <property type="entry name" value="Rieske_2Fe-2S_sf"/>
</dbReference>
<dbReference type="InterPro" id="IPR014349">
    <property type="entry name" value="Rieske_Fe-S_prot"/>
</dbReference>
<dbReference type="InterPro" id="IPR005805">
    <property type="entry name" value="Rieske_Fe-S_prot_C"/>
</dbReference>
<dbReference type="NCBIfam" id="NF045928">
    <property type="entry name" value="Cytb6fFeSPetC"/>
    <property type="match status" value="1"/>
</dbReference>
<dbReference type="NCBIfam" id="NF010001">
    <property type="entry name" value="PRK13474.1"/>
    <property type="match status" value="1"/>
</dbReference>
<dbReference type="PANTHER" id="PTHR10134">
    <property type="entry name" value="CYTOCHROME B-C1 COMPLEX SUBUNIT RIESKE, MITOCHONDRIAL"/>
    <property type="match status" value="1"/>
</dbReference>
<dbReference type="Pfam" id="PF00355">
    <property type="entry name" value="Rieske"/>
    <property type="match status" value="1"/>
</dbReference>
<dbReference type="Pfam" id="PF25471">
    <property type="entry name" value="TM_PetC"/>
    <property type="match status" value="1"/>
</dbReference>
<dbReference type="PRINTS" id="PR00162">
    <property type="entry name" value="RIESKE"/>
</dbReference>
<dbReference type="SUPFAM" id="SSF50022">
    <property type="entry name" value="ISP domain"/>
    <property type="match status" value="1"/>
</dbReference>
<dbReference type="PROSITE" id="PS51296">
    <property type="entry name" value="RIESKE"/>
    <property type="match status" value="1"/>
</dbReference>
<protein>
    <recommendedName>
        <fullName evidence="1">Cytochrome b6-f complex iron-sulfur subunit</fullName>
        <ecNumber evidence="1">7.1.1.6</ecNumber>
    </recommendedName>
    <alternativeName>
        <fullName evidence="1">Plastohydroquinone:plastocyanin oxidoreductase iron-sulfur protein</fullName>
        <shortName evidence="1">ISP</shortName>
        <shortName evidence="1">RISP</shortName>
    </alternativeName>
    <alternativeName>
        <fullName evidence="1">Rieske iron-sulfur protein</fullName>
    </alternativeName>
</protein>
<accession>A5GMW1</accession>